<accession>Q0KD80</accession>
<sequence>MTERKQGAARPLNRPLVQPQGEPQKACKLPAALLYADPLPEDLVEVGYIGAAYGIRGWIKVLPHADDASALLHARRWWLLAPPQAGLVAADASRAQPVCVKIAQSREHSGTVVAQASGVADRNLAEALKGRRVWIRRADFPAPEEDEFYWVDLIGCTVSNEQGELLGEVSGLIDNGAHQILQVACVLPDGKAGERLIPFVDAFLRSVDTAGKRIVVDWGLDY</sequence>
<feature type="chain" id="PRO_0000351788" description="Ribosome maturation factor RimM">
    <location>
        <begin position="1"/>
        <end position="222"/>
    </location>
</feature>
<feature type="domain" description="PRC barrel" evidence="1">
    <location>
        <begin position="145"/>
        <end position="222"/>
    </location>
</feature>
<feature type="region of interest" description="Disordered" evidence="2">
    <location>
        <begin position="1"/>
        <end position="22"/>
    </location>
</feature>
<reference key="1">
    <citation type="journal article" date="2006" name="Nat. Biotechnol.">
        <title>Genome sequence of the bioplastic-producing 'Knallgas' bacterium Ralstonia eutropha H16.</title>
        <authorList>
            <person name="Pohlmann A."/>
            <person name="Fricke W.F."/>
            <person name="Reinecke F."/>
            <person name="Kusian B."/>
            <person name="Liesegang H."/>
            <person name="Cramm R."/>
            <person name="Eitinger T."/>
            <person name="Ewering C."/>
            <person name="Poetter M."/>
            <person name="Schwartz E."/>
            <person name="Strittmatter A."/>
            <person name="Voss I."/>
            <person name="Gottschalk G."/>
            <person name="Steinbuechel A."/>
            <person name="Friedrich B."/>
            <person name="Bowien B."/>
        </authorList>
    </citation>
    <scope>NUCLEOTIDE SEQUENCE [LARGE SCALE GENOMIC DNA]</scope>
    <source>
        <strain>ATCC 17699 / DSM 428 / KCTC 22496 / NCIMB 10442 / H16 / Stanier 337</strain>
    </source>
</reference>
<organism>
    <name type="scientific">Cupriavidus necator (strain ATCC 17699 / DSM 428 / KCTC 22496 / NCIMB 10442 / H16 / Stanier 337)</name>
    <name type="common">Ralstonia eutropha</name>
    <dbReference type="NCBI Taxonomy" id="381666"/>
    <lineage>
        <taxon>Bacteria</taxon>
        <taxon>Pseudomonadati</taxon>
        <taxon>Pseudomonadota</taxon>
        <taxon>Betaproteobacteria</taxon>
        <taxon>Burkholderiales</taxon>
        <taxon>Burkholderiaceae</taxon>
        <taxon>Cupriavidus</taxon>
    </lineage>
</organism>
<protein>
    <recommendedName>
        <fullName evidence="1">Ribosome maturation factor RimM</fullName>
    </recommendedName>
</protein>
<comment type="function">
    <text evidence="1">An accessory protein needed during the final step in the assembly of 30S ribosomal subunit, possibly for assembly of the head region. Essential for efficient processing of 16S rRNA. May be needed both before and after RbfA during the maturation of 16S rRNA. It has affinity for free ribosomal 30S subunits but not for 70S ribosomes.</text>
</comment>
<comment type="subunit">
    <text evidence="1">Binds ribosomal protein uS19.</text>
</comment>
<comment type="subcellular location">
    <subcellularLocation>
        <location evidence="1">Cytoplasm</location>
    </subcellularLocation>
</comment>
<comment type="domain">
    <text evidence="1">The PRC barrel domain binds ribosomal protein uS19.</text>
</comment>
<comment type="similarity">
    <text evidence="1">Belongs to the RimM family.</text>
</comment>
<dbReference type="EMBL" id="AM260479">
    <property type="protein sequence ID" value="CAJ92041.1"/>
    <property type="molecule type" value="Genomic_DNA"/>
</dbReference>
<dbReference type="SMR" id="Q0KD80"/>
<dbReference type="STRING" id="381666.H16_A0895"/>
<dbReference type="KEGG" id="reh:H16_A0895"/>
<dbReference type="eggNOG" id="COG0806">
    <property type="taxonomic scope" value="Bacteria"/>
</dbReference>
<dbReference type="HOGENOM" id="CLU_077636_1_0_4"/>
<dbReference type="OrthoDB" id="9783509at2"/>
<dbReference type="Proteomes" id="UP000008210">
    <property type="component" value="Chromosome 1"/>
</dbReference>
<dbReference type="GO" id="GO:0005737">
    <property type="term" value="C:cytoplasm"/>
    <property type="evidence" value="ECO:0007669"/>
    <property type="project" value="UniProtKB-SubCell"/>
</dbReference>
<dbReference type="GO" id="GO:0005840">
    <property type="term" value="C:ribosome"/>
    <property type="evidence" value="ECO:0007669"/>
    <property type="project" value="InterPro"/>
</dbReference>
<dbReference type="GO" id="GO:0043022">
    <property type="term" value="F:ribosome binding"/>
    <property type="evidence" value="ECO:0007669"/>
    <property type="project" value="InterPro"/>
</dbReference>
<dbReference type="GO" id="GO:0042274">
    <property type="term" value="P:ribosomal small subunit biogenesis"/>
    <property type="evidence" value="ECO:0007669"/>
    <property type="project" value="UniProtKB-UniRule"/>
</dbReference>
<dbReference type="GO" id="GO:0006364">
    <property type="term" value="P:rRNA processing"/>
    <property type="evidence" value="ECO:0007669"/>
    <property type="project" value="UniProtKB-UniRule"/>
</dbReference>
<dbReference type="Gene3D" id="2.30.30.240">
    <property type="entry name" value="PRC-barrel domain"/>
    <property type="match status" value="1"/>
</dbReference>
<dbReference type="Gene3D" id="2.40.30.60">
    <property type="entry name" value="RimM"/>
    <property type="match status" value="1"/>
</dbReference>
<dbReference type="HAMAP" id="MF_00014">
    <property type="entry name" value="Ribosome_mat_RimM"/>
    <property type="match status" value="1"/>
</dbReference>
<dbReference type="InterPro" id="IPR011033">
    <property type="entry name" value="PRC_barrel-like_sf"/>
</dbReference>
<dbReference type="InterPro" id="IPR056792">
    <property type="entry name" value="PRC_RimM"/>
</dbReference>
<dbReference type="InterPro" id="IPR011961">
    <property type="entry name" value="RimM"/>
</dbReference>
<dbReference type="InterPro" id="IPR002676">
    <property type="entry name" value="RimM_N"/>
</dbReference>
<dbReference type="InterPro" id="IPR036976">
    <property type="entry name" value="RimM_N_sf"/>
</dbReference>
<dbReference type="InterPro" id="IPR009000">
    <property type="entry name" value="Transl_B-barrel_sf"/>
</dbReference>
<dbReference type="NCBIfam" id="TIGR02273">
    <property type="entry name" value="16S_RimM"/>
    <property type="match status" value="1"/>
</dbReference>
<dbReference type="PANTHER" id="PTHR33692">
    <property type="entry name" value="RIBOSOME MATURATION FACTOR RIMM"/>
    <property type="match status" value="1"/>
</dbReference>
<dbReference type="PANTHER" id="PTHR33692:SF1">
    <property type="entry name" value="RIBOSOME MATURATION FACTOR RIMM"/>
    <property type="match status" value="1"/>
</dbReference>
<dbReference type="Pfam" id="PF24986">
    <property type="entry name" value="PRC_RimM"/>
    <property type="match status" value="1"/>
</dbReference>
<dbReference type="Pfam" id="PF01782">
    <property type="entry name" value="RimM"/>
    <property type="match status" value="1"/>
</dbReference>
<dbReference type="SUPFAM" id="SSF50346">
    <property type="entry name" value="PRC-barrel domain"/>
    <property type="match status" value="1"/>
</dbReference>
<dbReference type="SUPFAM" id="SSF50447">
    <property type="entry name" value="Translation proteins"/>
    <property type="match status" value="1"/>
</dbReference>
<keyword id="KW-0143">Chaperone</keyword>
<keyword id="KW-0963">Cytoplasm</keyword>
<keyword id="KW-1185">Reference proteome</keyword>
<keyword id="KW-0690">Ribosome biogenesis</keyword>
<keyword id="KW-0698">rRNA processing</keyword>
<evidence type="ECO:0000255" key="1">
    <source>
        <dbReference type="HAMAP-Rule" id="MF_00014"/>
    </source>
</evidence>
<evidence type="ECO:0000256" key="2">
    <source>
        <dbReference type="SAM" id="MobiDB-lite"/>
    </source>
</evidence>
<name>RIMM_CUPNH</name>
<gene>
    <name evidence="1" type="primary">rimM</name>
    <name type="ordered locus">H16_A0895</name>
</gene>
<proteinExistence type="inferred from homology"/>